<name>STS1_ASPOR</name>
<reference key="1">
    <citation type="journal article" date="2005" name="Nature">
        <title>Genome sequencing and analysis of Aspergillus oryzae.</title>
        <authorList>
            <person name="Machida M."/>
            <person name="Asai K."/>
            <person name="Sano M."/>
            <person name="Tanaka T."/>
            <person name="Kumagai T."/>
            <person name="Terai G."/>
            <person name="Kusumoto K."/>
            <person name="Arima T."/>
            <person name="Akita O."/>
            <person name="Kashiwagi Y."/>
            <person name="Abe K."/>
            <person name="Gomi K."/>
            <person name="Horiuchi H."/>
            <person name="Kitamoto K."/>
            <person name="Kobayashi T."/>
            <person name="Takeuchi M."/>
            <person name="Denning D.W."/>
            <person name="Galagan J.E."/>
            <person name="Nierman W.C."/>
            <person name="Yu J."/>
            <person name="Archer D.B."/>
            <person name="Bennett J.W."/>
            <person name="Bhatnagar D."/>
            <person name="Cleveland T.E."/>
            <person name="Fedorova N.D."/>
            <person name="Gotoh O."/>
            <person name="Horikawa H."/>
            <person name="Hosoyama A."/>
            <person name="Ichinomiya M."/>
            <person name="Igarashi R."/>
            <person name="Iwashita K."/>
            <person name="Juvvadi P.R."/>
            <person name="Kato M."/>
            <person name="Kato Y."/>
            <person name="Kin T."/>
            <person name="Kokubun A."/>
            <person name="Maeda H."/>
            <person name="Maeyama N."/>
            <person name="Maruyama J."/>
            <person name="Nagasaki H."/>
            <person name="Nakajima T."/>
            <person name="Oda K."/>
            <person name="Okada K."/>
            <person name="Paulsen I."/>
            <person name="Sakamoto K."/>
            <person name="Sawano T."/>
            <person name="Takahashi M."/>
            <person name="Takase K."/>
            <person name="Terabayashi Y."/>
            <person name="Wortman J.R."/>
            <person name="Yamada O."/>
            <person name="Yamagata Y."/>
            <person name="Anazawa H."/>
            <person name="Hata Y."/>
            <person name="Koide Y."/>
            <person name="Komori T."/>
            <person name="Koyama Y."/>
            <person name="Minetoki T."/>
            <person name="Suharnan S."/>
            <person name="Tanaka A."/>
            <person name="Isono K."/>
            <person name="Kuhara S."/>
            <person name="Ogasawara N."/>
            <person name="Kikuchi H."/>
        </authorList>
    </citation>
    <scope>NUCLEOTIDE SEQUENCE [LARGE SCALE GENOMIC DNA]</scope>
    <source>
        <strain>ATCC 42149 / RIB 40</strain>
    </source>
</reference>
<keyword id="KW-0963">Cytoplasm</keyword>
<keyword id="KW-0539">Nucleus</keyword>
<keyword id="KW-0653">Protein transport</keyword>
<keyword id="KW-1185">Reference proteome</keyword>
<keyword id="KW-0813">Transport</keyword>
<evidence type="ECO:0000250" key="1"/>
<evidence type="ECO:0000256" key="2">
    <source>
        <dbReference type="SAM" id="MobiDB-lite"/>
    </source>
</evidence>
<evidence type="ECO:0000305" key="3"/>
<dbReference type="EMBL" id="BA000051">
    <property type="protein sequence ID" value="BAE59358.1"/>
    <property type="molecule type" value="Genomic_DNA"/>
</dbReference>
<dbReference type="RefSeq" id="XP_001821360.1">
    <property type="nucleotide sequence ID" value="XM_001821308.2"/>
</dbReference>
<dbReference type="SMR" id="Q2UGF7"/>
<dbReference type="STRING" id="510516.Q2UGF7"/>
<dbReference type="EnsemblFungi" id="BAE59358">
    <property type="protein sequence ID" value="BAE59358"/>
    <property type="gene ID" value="AO090023000858"/>
</dbReference>
<dbReference type="GeneID" id="5993362"/>
<dbReference type="KEGG" id="aor:AO090023000858"/>
<dbReference type="VEuPathDB" id="FungiDB:AO090023000858"/>
<dbReference type="HOGENOM" id="CLU_033658_0_0_1"/>
<dbReference type="OMA" id="DYTPHFL"/>
<dbReference type="OrthoDB" id="21262at5052"/>
<dbReference type="Proteomes" id="UP000006564">
    <property type="component" value="Chromosome 3"/>
</dbReference>
<dbReference type="GO" id="GO:0005737">
    <property type="term" value="C:cytoplasm"/>
    <property type="evidence" value="ECO:0007669"/>
    <property type="project" value="UniProtKB-SubCell"/>
</dbReference>
<dbReference type="GO" id="GO:0031965">
    <property type="term" value="C:nuclear membrane"/>
    <property type="evidence" value="ECO:0007669"/>
    <property type="project" value="TreeGrafter"/>
</dbReference>
<dbReference type="GO" id="GO:0070628">
    <property type="term" value="F:proteasome binding"/>
    <property type="evidence" value="ECO:0007669"/>
    <property type="project" value="TreeGrafter"/>
</dbReference>
<dbReference type="GO" id="GO:0071630">
    <property type="term" value="P:nuclear protein quality control by the ubiquitin-proteasome system"/>
    <property type="evidence" value="ECO:0007669"/>
    <property type="project" value="InterPro"/>
</dbReference>
<dbReference type="GO" id="GO:0031144">
    <property type="term" value="P:proteasome localization"/>
    <property type="evidence" value="ECO:0007669"/>
    <property type="project" value="InterPro"/>
</dbReference>
<dbReference type="GO" id="GO:0015031">
    <property type="term" value="P:protein transport"/>
    <property type="evidence" value="ECO:0007669"/>
    <property type="project" value="UniProtKB-KW"/>
</dbReference>
<dbReference type="FunFam" id="1.20.58.1590:FF:000001">
    <property type="entry name" value="Tethering factor for nuclear proteasome STS1"/>
    <property type="match status" value="1"/>
</dbReference>
<dbReference type="Gene3D" id="1.20.58.1590">
    <property type="entry name" value="Tethering factor for nuclear proteasome Cut8/Sts1"/>
    <property type="match status" value="1"/>
</dbReference>
<dbReference type="InterPro" id="IPR013868">
    <property type="entry name" value="Cut8/Sts1_fam"/>
</dbReference>
<dbReference type="InterPro" id="IPR038422">
    <property type="entry name" value="Cut8/Sts1_sf"/>
</dbReference>
<dbReference type="PANTHER" id="PTHR28032">
    <property type="entry name" value="FI02826P"/>
    <property type="match status" value="1"/>
</dbReference>
<dbReference type="PANTHER" id="PTHR28032:SF1">
    <property type="entry name" value="FI02826P"/>
    <property type="match status" value="1"/>
</dbReference>
<dbReference type="Pfam" id="PF08559">
    <property type="entry name" value="Cut8"/>
    <property type="match status" value="1"/>
</dbReference>
<organism>
    <name type="scientific">Aspergillus oryzae (strain ATCC 42149 / RIB 40)</name>
    <name type="common">Yellow koji mold</name>
    <dbReference type="NCBI Taxonomy" id="510516"/>
    <lineage>
        <taxon>Eukaryota</taxon>
        <taxon>Fungi</taxon>
        <taxon>Dikarya</taxon>
        <taxon>Ascomycota</taxon>
        <taxon>Pezizomycotina</taxon>
        <taxon>Eurotiomycetes</taxon>
        <taxon>Eurotiomycetidae</taxon>
        <taxon>Eurotiales</taxon>
        <taxon>Aspergillaceae</taxon>
        <taxon>Aspergillus</taxon>
        <taxon>Aspergillus subgen. Circumdati</taxon>
    </lineage>
</organism>
<gene>
    <name type="primary">sts1</name>
    <name type="ORF">AO090023000858</name>
</gene>
<sequence length="312" mass="34193">MNSLVATPPVPPHFYEYSRLSSSRPMSTPTYTPNSRKRKADDDGNDHDGRMSASPTSSPAFTPRSLPSRNMKRARPNVSGRPLSLPRLLETLDTDALRGVLRSMCERHPGLVDEVVHTAPRPSVSSALQVLRNYQSTLQSSFPLGGNPASDYAYNRVRQPLSNLLDALSDFTPHFLPPNEIQPSLSLNYLDGATEIIHALPRWHTPQNNIERDSAYDEICKAWILVIREAAKRGGGIQLQYGGWDQKLAKHNQNSGGKLQAAVNELGASLGWMHGPETQSHASPGGNDFGSIREQLLSGTYGLGTPVKVGPW</sequence>
<protein>
    <recommendedName>
        <fullName>Tethering factor for nuclear proteasome sts1</fullName>
    </recommendedName>
</protein>
<accession>Q2UGF7</accession>
<comment type="function">
    <text evidence="1">Involved in ubiquitin-mediated protein degradation. Regulatory factor in the ubiquitin/proteasome pathway that controls the turnover of proteasome substrates. Targets proteasomes to the nucleus and facilitates the degradation of nuclear proteins (By similarity).</text>
</comment>
<comment type="subunit">
    <text evidence="1">Binds the proteasome.</text>
</comment>
<comment type="subcellular location">
    <subcellularLocation>
        <location evidence="1">Cytoplasm</location>
    </subcellularLocation>
    <subcellularLocation>
        <location evidence="1">Nucleus</location>
    </subcellularLocation>
</comment>
<comment type="similarity">
    <text evidence="3">Belongs to the cut8/STS1 family.</text>
</comment>
<feature type="chain" id="PRO_0000409399" description="Tethering factor for nuclear proteasome sts1">
    <location>
        <begin position="1"/>
        <end position="312"/>
    </location>
</feature>
<feature type="region of interest" description="Disordered" evidence="2">
    <location>
        <begin position="1"/>
        <end position="82"/>
    </location>
</feature>
<feature type="compositionally biased region" description="Polar residues" evidence="2">
    <location>
        <begin position="19"/>
        <end position="34"/>
    </location>
</feature>
<feature type="compositionally biased region" description="Basic and acidic residues" evidence="2">
    <location>
        <begin position="39"/>
        <end position="50"/>
    </location>
</feature>
<feature type="compositionally biased region" description="Low complexity" evidence="2">
    <location>
        <begin position="52"/>
        <end position="65"/>
    </location>
</feature>
<proteinExistence type="inferred from homology"/>